<reference key="1">
    <citation type="journal article" date="1999" name="Nature">
        <title>Genomic sequence comparison of two unrelated isolates of the human gastric pathogen Helicobacter pylori.</title>
        <authorList>
            <person name="Alm R.A."/>
            <person name="Ling L.-S.L."/>
            <person name="Moir D.T."/>
            <person name="King B.L."/>
            <person name="Brown E.D."/>
            <person name="Doig P.C."/>
            <person name="Smith D.R."/>
            <person name="Noonan B."/>
            <person name="Guild B.C."/>
            <person name="deJonge B.L."/>
            <person name="Carmel G."/>
            <person name="Tummino P.J."/>
            <person name="Caruso A."/>
            <person name="Uria-Nickelsen M."/>
            <person name="Mills D.M."/>
            <person name="Ives C."/>
            <person name="Gibson R."/>
            <person name="Merberg D."/>
            <person name="Mills S.D."/>
            <person name="Jiang Q."/>
            <person name="Taylor D.E."/>
            <person name="Vovis G.F."/>
            <person name="Trust T.J."/>
        </authorList>
    </citation>
    <scope>NUCLEOTIDE SEQUENCE [LARGE SCALE GENOMIC DNA]</scope>
    <source>
        <strain>J99 / ATCC 700824</strain>
    </source>
</reference>
<feature type="chain" id="PRO_0000194006" description="High-affinity nickel-transport protein NixA">
    <location>
        <begin position="1"/>
        <end position="331"/>
    </location>
</feature>
<feature type="transmembrane region" description="Helical" evidence="1">
    <location>
        <begin position="3"/>
        <end position="23"/>
    </location>
</feature>
<feature type="transmembrane region" description="Helical" evidence="1">
    <location>
        <begin position="77"/>
        <end position="97"/>
    </location>
</feature>
<feature type="transmembrane region" description="Helical" evidence="1">
    <location>
        <begin position="110"/>
        <end position="130"/>
    </location>
</feature>
<feature type="transmembrane region" description="Helical" evidence="1">
    <location>
        <begin position="184"/>
        <end position="204"/>
    </location>
</feature>
<feature type="transmembrane region" description="Helical" evidence="1">
    <location>
        <begin position="213"/>
        <end position="233"/>
    </location>
</feature>
<feature type="transmembrane region" description="Helical" evidence="1">
    <location>
        <begin position="259"/>
        <end position="279"/>
    </location>
</feature>
<feature type="transmembrane region" description="Helical" evidence="1">
    <location>
        <begin position="302"/>
        <end position="322"/>
    </location>
</feature>
<dbReference type="EMBL" id="AE001439">
    <property type="protein sequence ID" value="AAD05929.1"/>
    <property type="molecule type" value="Genomic_DNA"/>
</dbReference>
<dbReference type="PIR" id="F71943">
    <property type="entry name" value="F71943"/>
</dbReference>
<dbReference type="RefSeq" id="WP_000780409.1">
    <property type="nucleotide sequence ID" value="NC_000921.1"/>
</dbReference>
<dbReference type="KEGG" id="hpj:jhp_0348"/>
<dbReference type="PATRIC" id="fig|85963.30.peg.664"/>
<dbReference type="eggNOG" id="COG3376">
    <property type="taxonomic scope" value="Bacteria"/>
</dbReference>
<dbReference type="Proteomes" id="UP000000804">
    <property type="component" value="Chromosome"/>
</dbReference>
<dbReference type="GO" id="GO:0005886">
    <property type="term" value="C:plasma membrane"/>
    <property type="evidence" value="ECO:0007669"/>
    <property type="project" value="UniProtKB-SubCell"/>
</dbReference>
<dbReference type="GO" id="GO:0015099">
    <property type="term" value="F:nickel cation transmembrane transporter activity"/>
    <property type="evidence" value="ECO:0007669"/>
    <property type="project" value="InterPro"/>
</dbReference>
<dbReference type="InterPro" id="IPR004688">
    <property type="entry name" value="Ni/Co_transpt"/>
</dbReference>
<dbReference type="InterPro" id="IPR011541">
    <property type="entry name" value="Ni/Co_transpt_high_affinity"/>
</dbReference>
<dbReference type="NCBIfam" id="TIGR00802">
    <property type="entry name" value="nico"/>
    <property type="match status" value="1"/>
</dbReference>
<dbReference type="PANTHER" id="PTHR31611">
    <property type="entry name" value="HIGH-AFFINITY NICKEL TRANSPORT PROTEIN NIC1"/>
    <property type="match status" value="1"/>
</dbReference>
<dbReference type="PANTHER" id="PTHR31611:SF0">
    <property type="entry name" value="HIGH-AFFINITY NICKEL TRANSPORT PROTEIN NIC1"/>
    <property type="match status" value="1"/>
</dbReference>
<dbReference type="Pfam" id="PF03824">
    <property type="entry name" value="NicO"/>
    <property type="match status" value="1"/>
</dbReference>
<gene>
    <name type="primary">nixA</name>
    <name type="ordered locus">jhp_0348</name>
</gene>
<keyword id="KW-0997">Cell inner membrane</keyword>
<keyword id="KW-1003">Cell membrane</keyword>
<keyword id="KW-0472">Membrane</keyword>
<keyword id="KW-0533">Nickel</keyword>
<keyword id="KW-0812">Transmembrane</keyword>
<keyword id="KW-1133">Transmembrane helix</keyword>
<keyword id="KW-0813">Transport</keyword>
<accession>Q9ZM74</accession>
<organism>
    <name type="scientific">Helicobacter pylori (strain J99 / ATCC 700824)</name>
    <name type="common">Campylobacter pylori J99</name>
    <dbReference type="NCBI Taxonomy" id="85963"/>
    <lineage>
        <taxon>Bacteria</taxon>
        <taxon>Pseudomonadati</taxon>
        <taxon>Campylobacterota</taxon>
        <taxon>Epsilonproteobacteria</taxon>
        <taxon>Campylobacterales</taxon>
        <taxon>Helicobacteraceae</taxon>
        <taxon>Helicobacter</taxon>
    </lineage>
</organism>
<sequence length="331" mass="36991">MKLWFPYFLAIVFLHALGLALLFMANNASFYAAASMAYMLGAKHAFDADHIACIDNTIRKLTQQGKNAYGVGFYFSMGHSSVVILMTIISAFAIAWAKEHTPMLEEIGGVVGTLVSGLFLLIIGLLNAIILIDLLKIFKKSHSNESLSRQQNEEIERLLTSRGLLNRFFKPLFNFVSKSWHIYPVGFLFGLGFDTASEIALLALSSSAIKVSVVGMLSLPILFAAGMSLFDTLDGAFMLKAYDWAFKTPLRKIYYNISITALSVFIALFIGLIELFQVISEKLHLKFENRLLSTLQSLEFTDLGYYLVGLFVIAFLGSFFLWKIKFSKLES</sequence>
<proteinExistence type="inferred from homology"/>
<name>NIXA_HELPJ</name>
<protein>
    <recommendedName>
        <fullName>High-affinity nickel-transport protein NixA</fullName>
    </recommendedName>
</protein>
<comment type="function">
    <text>High-affinity nickel intake protein. Imports nickel ions in an energy-dependent fashion. Necessary for the expression of catalytically active urease.</text>
</comment>
<comment type="subcellular location">
    <subcellularLocation>
        <location evidence="2">Cell inner membrane</location>
        <topology evidence="2">Multi-pass membrane protein</topology>
    </subcellularLocation>
</comment>
<comment type="similarity">
    <text evidence="2">Belongs to the NiCoT transporter (TC 2.A.52) family.</text>
</comment>
<evidence type="ECO:0000255" key="1"/>
<evidence type="ECO:0000305" key="2"/>